<evidence type="ECO:0000250" key="1"/>
<evidence type="ECO:0000250" key="2">
    <source>
        <dbReference type="UniProtKB" id="O88667"/>
    </source>
</evidence>
<evidence type="ECO:0000256" key="3">
    <source>
        <dbReference type="SAM" id="MobiDB-lite"/>
    </source>
</evidence>
<evidence type="ECO:0000269" key="4">
    <source>
    </source>
</evidence>
<evidence type="ECO:0000269" key="5">
    <source>
    </source>
</evidence>
<evidence type="ECO:0000305" key="6"/>
<evidence type="ECO:0007829" key="7">
    <source>
        <dbReference type="PDB" id="2DPX"/>
    </source>
</evidence>
<evidence type="ECO:0007829" key="8">
    <source>
        <dbReference type="PDB" id="2GJS"/>
    </source>
</evidence>
<evidence type="ECO:0007829" key="9">
    <source>
        <dbReference type="PDB" id="3Q72"/>
    </source>
</evidence>
<gene>
    <name type="primary">RRAD</name>
    <name type="synonym">RAD</name>
</gene>
<comment type="function">
    <text evidence="2 4">May regulate basal voltage-dependent L-type Ca(2+) currents and be required for beta-adrenergic augmentation of Ca(2+) influx in cardiomyocytes, thereby regulating increases in heart rate and contractile force (By similarity). May play an important role in cardiac antiarrhythmia via the strong suppression of voltage-gated L-type Ca(2+) currents (By similarity). Regulates voltage-dependent L-type calcium channel subunit alpha-1C trafficking to the cell membrane (By similarity). Inhibits cardiac hypertrophy through the calmodulin-dependent kinase II (CaMKII) pathway (PubMed:18056528). Inhibits phosphorylation and activation of CAMK2D (PubMed:18056528).</text>
</comment>
<comment type="subunit">
    <text evidence="2 4 5">Interacts with calmodulin preferentially in the inactive, GDP-bound form (PubMed:18056528, PubMed:9115241). Binds CAMKII which is capable of phosphorylating RAD in vitro (PubMed:9115241). Interacts with CAMK2D (PubMed:18056528). Interacts with CACNB2; interaction may be involved in beta-adrenergic regulation of heart rate and contractile force (By similarity). Interaction with CACNB2 regulates the trafficking of CACNA1C to the cell membrane (By similarity).</text>
</comment>
<comment type="interaction">
    <interactant intactId="EBI-3911502">
        <id>P55042</id>
    </interactant>
    <interactant intactId="EBI-748961">
        <id>O95273</id>
        <label>CCNDBP1</label>
    </interactant>
    <organismsDiffer>false</organismsDiffer>
    <experiments>5</experiments>
</comment>
<comment type="subcellular location">
    <subcellularLocation>
        <location evidence="1">Cell membrane</location>
    </subcellularLocation>
</comment>
<comment type="tissue specificity">
    <text evidence="4">Most abundantly expressed in the heart. Also found in the skeletal muscle and lung. Lesser amounts in placenta and kidney. Also detected in adipose tissue. Overexpressed in muscle of type II diabetic humans.</text>
</comment>
<comment type="induction">
    <text evidence="4">Down-regulated in failing hearts.</text>
</comment>
<comment type="similarity">
    <text evidence="6">Belongs to the small GTPase superfamily. RGK family.</text>
</comment>
<organism>
    <name type="scientific">Homo sapiens</name>
    <name type="common">Human</name>
    <dbReference type="NCBI Taxonomy" id="9606"/>
    <lineage>
        <taxon>Eukaryota</taxon>
        <taxon>Metazoa</taxon>
        <taxon>Chordata</taxon>
        <taxon>Craniata</taxon>
        <taxon>Vertebrata</taxon>
        <taxon>Euteleostomi</taxon>
        <taxon>Mammalia</taxon>
        <taxon>Eutheria</taxon>
        <taxon>Euarchontoglires</taxon>
        <taxon>Primates</taxon>
        <taxon>Haplorrhini</taxon>
        <taxon>Catarrhini</taxon>
        <taxon>Hominidae</taxon>
        <taxon>Homo</taxon>
    </lineage>
</organism>
<protein>
    <recommendedName>
        <fullName>GTP-binding protein RAD</fullName>
    </recommendedName>
    <alternativeName>
        <fullName>RAD1</fullName>
    </alternativeName>
    <alternativeName>
        <fullName>Ras associated with diabetes</fullName>
    </alternativeName>
</protein>
<accession>P55042</accession>
<accession>Q96F39</accession>
<reference key="1">
    <citation type="journal article" date="1993" name="Science">
        <title>Rad: a member of the Ras family overexpressed in muscle of type II diabetic humans.</title>
        <authorList>
            <person name="Reynet C."/>
            <person name="Kahn C.R."/>
        </authorList>
    </citation>
    <scope>NUCLEOTIDE SEQUENCE [MRNA]</scope>
    <source>
        <tissue>Skeletal muscle</tissue>
    </source>
</reference>
<reference key="2">
    <citation type="journal article" date="2004" name="Genome Res.">
        <title>The status, quality, and expansion of the NIH full-length cDNA project: the Mammalian Gene Collection (MGC).</title>
        <authorList>
            <consortium name="The MGC Project Team"/>
        </authorList>
    </citation>
    <scope>NUCLEOTIDE SEQUENCE [LARGE SCALE MRNA]</scope>
    <source>
        <tissue>Placenta</tissue>
        <tissue>Retina</tissue>
    </source>
</reference>
<reference key="3">
    <citation type="journal article" date="1997" name="J. Biol. Chem.">
        <title>Rad and Rad-related GTPases interact with calmodulin and calmodulin-dependent protein kinase II.</title>
        <authorList>
            <person name="Moyers J.S."/>
            <person name="Bilan P.J."/>
            <person name="Zhu J."/>
            <person name="Kahn C.R."/>
        </authorList>
    </citation>
    <scope>INTERACTION WITH CALMODULIN</scope>
</reference>
<reference key="4">
    <citation type="journal article" date="2007" name="Circulation">
        <title>Rad GTPase deficiency leads to cardiac hypertrophy.</title>
        <authorList>
            <person name="Chang L."/>
            <person name="Zhang J."/>
            <person name="Tseng Y.-H."/>
            <person name="Xie C.-Q."/>
            <person name="Ilany J."/>
            <person name="Bruning J.C."/>
            <person name="Sun Z."/>
            <person name="Zhu X."/>
            <person name="Cui T."/>
            <person name="Youker K.A."/>
            <person name="Yang Q."/>
            <person name="Day S.M."/>
            <person name="Kahn C.R."/>
            <person name="Chen Y.E."/>
        </authorList>
    </citation>
    <scope>FUNCTION</scope>
    <scope>INDUCTION</scope>
    <scope>TISSUE SPECIFICITY</scope>
    <scope>INTERACTION WITH CAMK2D AND CALMODULIN</scope>
</reference>
<proteinExistence type="evidence at protein level"/>
<name>RAD_HUMAN</name>
<keyword id="KW-0002">3D-structure</keyword>
<keyword id="KW-0112">Calmodulin-binding</keyword>
<keyword id="KW-1003">Cell membrane</keyword>
<keyword id="KW-0342">GTP-binding</keyword>
<keyword id="KW-0472">Membrane</keyword>
<keyword id="KW-0488">Methylation</keyword>
<keyword id="KW-0547">Nucleotide-binding</keyword>
<keyword id="KW-0597">Phosphoprotein</keyword>
<keyword id="KW-1267">Proteomics identification</keyword>
<keyword id="KW-1185">Reference proteome</keyword>
<feature type="chain" id="PRO_0000122478" description="GTP-binding protein RAD">
    <location>
        <begin position="1"/>
        <end position="308"/>
    </location>
</feature>
<feature type="region of interest" description="Disordered" evidence="3">
    <location>
        <begin position="1"/>
        <end position="88"/>
    </location>
</feature>
<feature type="region of interest" description="Calmodulin-binding">
    <location>
        <begin position="278"/>
        <end position="297"/>
    </location>
</feature>
<feature type="compositionally biased region" description="Gly residues" evidence="3">
    <location>
        <begin position="1"/>
        <end position="16"/>
    </location>
</feature>
<feature type="compositionally biased region" description="Low complexity" evidence="3">
    <location>
        <begin position="48"/>
        <end position="68"/>
    </location>
</feature>
<feature type="binding site" evidence="1">
    <location>
        <begin position="98"/>
        <end position="105"/>
    </location>
    <ligand>
        <name>GTP</name>
        <dbReference type="ChEBI" id="CHEBI:37565"/>
    </ligand>
</feature>
<feature type="binding site" evidence="1">
    <location>
        <begin position="203"/>
        <end position="206"/>
    </location>
    <ligand>
        <name>GTP</name>
        <dbReference type="ChEBI" id="CHEBI:37565"/>
    </ligand>
</feature>
<feature type="modified residue" description="Omega-N-methylarginine" evidence="2">
    <location>
        <position position="24"/>
    </location>
</feature>
<feature type="modified residue" description="Phosphoserine" evidence="2">
    <location>
        <position position="26"/>
    </location>
</feature>
<feature type="sequence variant" id="VAR_049497" description="In dbSNP:rs7198458.">
    <original>Q</original>
    <variation>P</variation>
    <location>
        <position position="66"/>
    </location>
</feature>
<feature type="strand" evidence="9">
    <location>
        <begin position="93"/>
        <end position="99"/>
    </location>
</feature>
<feature type="helix" evidence="9">
    <location>
        <begin position="104"/>
        <end position="111"/>
    </location>
</feature>
<feature type="strand" evidence="9">
    <location>
        <begin position="126"/>
        <end position="133"/>
    </location>
</feature>
<feature type="strand" evidence="9">
    <location>
        <begin position="136"/>
        <end position="144"/>
    </location>
</feature>
<feature type="helix" evidence="7">
    <location>
        <begin position="155"/>
        <end position="159"/>
    </location>
</feature>
<feature type="strand" evidence="9">
    <location>
        <begin position="164"/>
        <end position="170"/>
    </location>
</feature>
<feature type="helix" evidence="9">
    <location>
        <begin position="174"/>
        <end position="189"/>
    </location>
</feature>
<feature type="strand" evidence="9">
    <location>
        <begin position="198"/>
        <end position="203"/>
    </location>
</feature>
<feature type="helix" evidence="8">
    <location>
        <begin position="208"/>
        <end position="210"/>
    </location>
</feature>
<feature type="helix" evidence="9">
    <location>
        <begin position="215"/>
        <end position="224"/>
    </location>
</feature>
<feature type="strand" evidence="9">
    <location>
        <begin position="228"/>
        <end position="231"/>
    </location>
</feature>
<feature type="helix" evidence="9">
    <location>
        <begin position="234"/>
        <end position="236"/>
    </location>
</feature>
<feature type="helix" evidence="9">
    <location>
        <begin position="240"/>
        <end position="254"/>
    </location>
</feature>
<sequence length="308" mass="33245">MTLNGGGSGAGGSRGGGQERERRRGSTPWGPAPPLHRRSMPVDERDLQAALTPGALTAAAAGTGTQGPRLDWPEDSEDSLSSGGSDSDESVYKVLLLGAPGVGKSALARIFGGVEDGPEAEAAGHTYDRSIVVDGEEASLMVYDIWEQDGGRWLPGHCMAMGDAYVIVYSVTDKGSFEKASELRVQLRRARQTDDVPIILVGNKSDLVRSREVSVDEGRACAVVFDCKFIETSAALHHNVQALFEGVVRQIRLRRDSKEANARRQAGTRRRESLGKKAKRFLGRIVARNSRKMAFRAKSKSCHDLSVL</sequence>
<dbReference type="EMBL" id="L24564">
    <property type="protein sequence ID" value="AAA36540.1"/>
    <property type="molecule type" value="mRNA"/>
</dbReference>
<dbReference type="EMBL" id="BC011645">
    <property type="protein sequence ID" value="AAH11645.1"/>
    <property type="molecule type" value="mRNA"/>
</dbReference>
<dbReference type="EMBL" id="BC057815">
    <property type="protein sequence ID" value="AAH57815.1"/>
    <property type="molecule type" value="mRNA"/>
</dbReference>
<dbReference type="CCDS" id="CCDS10824.1"/>
<dbReference type="PIR" id="A49334">
    <property type="entry name" value="A49334"/>
</dbReference>
<dbReference type="RefSeq" id="NP_001122322.1">
    <property type="nucleotide sequence ID" value="NM_001128850.2"/>
</dbReference>
<dbReference type="RefSeq" id="NP_004156.1">
    <property type="nucleotide sequence ID" value="NM_004165.3"/>
</dbReference>
<dbReference type="PDB" id="2DPX">
    <property type="method" value="X-ray"/>
    <property type="resolution" value="1.80 A"/>
    <property type="chains" value="A/B=87-258"/>
</dbReference>
<dbReference type="PDB" id="2GJS">
    <property type="method" value="X-ray"/>
    <property type="resolution" value="1.90 A"/>
    <property type="chains" value="A/B=87-260"/>
</dbReference>
<dbReference type="PDB" id="3Q72">
    <property type="method" value="X-ray"/>
    <property type="resolution" value="1.66 A"/>
    <property type="chains" value="A/B=90-255"/>
</dbReference>
<dbReference type="PDB" id="3Q7P">
    <property type="method" value="X-ray"/>
    <property type="resolution" value="2.50 A"/>
    <property type="chains" value="A/B=90-255"/>
</dbReference>
<dbReference type="PDB" id="3Q7Q">
    <property type="method" value="X-ray"/>
    <property type="resolution" value="2.30 A"/>
    <property type="chains" value="A/B=90-255"/>
</dbReference>
<dbReference type="PDBsum" id="2DPX"/>
<dbReference type="PDBsum" id="2GJS"/>
<dbReference type="PDBsum" id="3Q72"/>
<dbReference type="PDBsum" id="3Q7P"/>
<dbReference type="PDBsum" id="3Q7Q"/>
<dbReference type="SMR" id="P55042"/>
<dbReference type="BioGRID" id="112150">
    <property type="interactions" value="29"/>
</dbReference>
<dbReference type="FunCoup" id="P55042">
    <property type="interactions" value="796"/>
</dbReference>
<dbReference type="IntAct" id="P55042">
    <property type="interactions" value="6"/>
</dbReference>
<dbReference type="MINT" id="P55042"/>
<dbReference type="STRING" id="9606.ENSP00000388744"/>
<dbReference type="GlyGen" id="P55042">
    <property type="glycosylation" value="2 sites, 1 O-linked glycan (1 site)"/>
</dbReference>
<dbReference type="iPTMnet" id="P55042"/>
<dbReference type="PhosphoSitePlus" id="P55042"/>
<dbReference type="BioMuta" id="RRAD"/>
<dbReference type="DMDM" id="38258885"/>
<dbReference type="jPOST" id="P55042"/>
<dbReference type="MassIVE" id="P55042"/>
<dbReference type="PaxDb" id="9606-ENSP00000299759"/>
<dbReference type="PeptideAtlas" id="P55042"/>
<dbReference type="ProteomicsDB" id="56766"/>
<dbReference type="Pumba" id="P55042"/>
<dbReference type="TopDownProteomics" id="P55042"/>
<dbReference type="Antibodypedia" id="44221">
    <property type="antibodies" value="162 antibodies from 31 providers"/>
</dbReference>
<dbReference type="DNASU" id="6236"/>
<dbReference type="Ensembl" id="ENST00000299759.11">
    <property type="protein sequence ID" value="ENSP00000299759.6"/>
    <property type="gene ID" value="ENSG00000166592.13"/>
</dbReference>
<dbReference type="GeneID" id="6236"/>
<dbReference type="KEGG" id="hsa:6236"/>
<dbReference type="MANE-Select" id="ENST00000299759.11">
    <property type="protein sequence ID" value="ENSP00000299759.6"/>
    <property type="RefSeq nucleotide sequence ID" value="NM_004165.3"/>
    <property type="RefSeq protein sequence ID" value="NP_004156.1"/>
</dbReference>
<dbReference type="UCSC" id="uc002eqn.2">
    <property type="organism name" value="human"/>
</dbReference>
<dbReference type="AGR" id="HGNC:10446"/>
<dbReference type="CTD" id="6236"/>
<dbReference type="DisGeNET" id="6236"/>
<dbReference type="GeneCards" id="RRAD"/>
<dbReference type="HGNC" id="HGNC:10446">
    <property type="gene designation" value="RRAD"/>
</dbReference>
<dbReference type="HPA" id="ENSG00000166592">
    <property type="expression patterns" value="Group enriched (heart muscle, skeletal muscle)"/>
</dbReference>
<dbReference type="MIM" id="179503">
    <property type="type" value="gene"/>
</dbReference>
<dbReference type="neXtProt" id="NX_P55042"/>
<dbReference type="OpenTargets" id="ENSG00000166592"/>
<dbReference type="PharmGKB" id="PA34860"/>
<dbReference type="VEuPathDB" id="HostDB:ENSG00000166592"/>
<dbReference type="eggNOG" id="KOG0395">
    <property type="taxonomic scope" value="Eukaryota"/>
</dbReference>
<dbReference type="GeneTree" id="ENSGT00940000159836"/>
<dbReference type="HOGENOM" id="CLU_041217_3_2_1"/>
<dbReference type="InParanoid" id="P55042"/>
<dbReference type="OMA" id="MPQTGQT"/>
<dbReference type="OrthoDB" id="5239715at2759"/>
<dbReference type="PAN-GO" id="P55042">
    <property type="GO annotations" value="3 GO annotations based on evolutionary models"/>
</dbReference>
<dbReference type="PhylomeDB" id="P55042"/>
<dbReference type="TreeFam" id="TF314379"/>
<dbReference type="PathwayCommons" id="P55042"/>
<dbReference type="Reactome" id="R-HSA-9031628">
    <property type="pathway name" value="NGF-stimulated transcription"/>
</dbReference>
<dbReference type="SignaLink" id="P55042"/>
<dbReference type="SIGNOR" id="P55042"/>
<dbReference type="BioGRID-ORCS" id="6236">
    <property type="hits" value="25 hits in 1160 CRISPR screens"/>
</dbReference>
<dbReference type="EvolutionaryTrace" id="P55042"/>
<dbReference type="GeneWiki" id="RRAD"/>
<dbReference type="GenomeRNAi" id="6236"/>
<dbReference type="Pharos" id="P55042">
    <property type="development level" value="Tbio"/>
</dbReference>
<dbReference type="PRO" id="PR:P55042"/>
<dbReference type="Proteomes" id="UP000005640">
    <property type="component" value="Chromosome 16"/>
</dbReference>
<dbReference type="RNAct" id="P55042">
    <property type="molecule type" value="protein"/>
</dbReference>
<dbReference type="Bgee" id="ENSG00000166592">
    <property type="expression patterns" value="Expressed in olfactory segment of nasal mucosa and 149 other cell types or tissues"/>
</dbReference>
<dbReference type="ExpressionAtlas" id="P55042">
    <property type="expression patterns" value="baseline and differential"/>
</dbReference>
<dbReference type="GO" id="GO:0005829">
    <property type="term" value="C:cytosol"/>
    <property type="evidence" value="ECO:0000304"/>
    <property type="project" value="Reactome"/>
</dbReference>
<dbReference type="GO" id="GO:0005886">
    <property type="term" value="C:plasma membrane"/>
    <property type="evidence" value="ECO:0000318"/>
    <property type="project" value="GO_Central"/>
</dbReference>
<dbReference type="GO" id="GO:0005246">
    <property type="term" value="F:calcium channel regulator activity"/>
    <property type="evidence" value="ECO:0000318"/>
    <property type="project" value="GO_Central"/>
</dbReference>
<dbReference type="GO" id="GO:0005516">
    <property type="term" value="F:calmodulin binding"/>
    <property type="evidence" value="ECO:0007669"/>
    <property type="project" value="UniProtKB-KW"/>
</dbReference>
<dbReference type="GO" id="GO:0005525">
    <property type="term" value="F:GTP binding"/>
    <property type="evidence" value="ECO:0000318"/>
    <property type="project" value="GO_Central"/>
</dbReference>
<dbReference type="GO" id="GO:0003924">
    <property type="term" value="F:GTPase activity"/>
    <property type="evidence" value="ECO:0000304"/>
    <property type="project" value="ProtInc"/>
</dbReference>
<dbReference type="GO" id="GO:0007264">
    <property type="term" value="P:small GTPase-mediated signal transduction"/>
    <property type="evidence" value="ECO:0000304"/>
    <property type="project" value="ProtInc"/>
</dbReference>
<dbReference type="CDD" id="cd04148">
    <property type="entry name" value="RGK"/>
    <property type="match status" value="1"/>
</dbReference>
<dbReference type="DisProt" id="DP02572"/>
<dbReference type="FunFam" id="3.40.50.300:FF:000311">
    <property type="entry name" value="GTP-binding protein RAD"/>
    <property type="match status" value="1"/>
</dbReference>
<dbReference type="Gene3D" id="3.40.50.300">
    <property type="entry name" value="P-loop containing nucleotide triphosphate hydrolases"/>
    <property type="match status" value="1"/>
</dbReference>
<dbReference type="InterPro" id="IPR027417">
    <property type="entry name" value="P-loop_NTPase"/>
</dbReference>
<dbReference type="InterPro" id="IPR017358">
    <property type="entry name" value="RGK"/>
</dbReference>
<dbReference type="InterPro" id="IPR051641">
    <property type="entry name" value="RGK_GTP-binding_reg"/>
</dbReference>
<dbReference type="InterPro" id="IPR005225">
    <property type="entry name" value="Small_GTP-bd"/>
</dbReference>
<dbReference type="InterPro" id="IPR001806">
    <property type="entry name" value="Small_GTPase"/>
</dbReference>
<dbReference type="NCBIfam" id="TIGR00231">
    <property type="entry name" value="small_GTP"/>
    <property type="match status" value="1"/>
</dbReference>
<dbReference type="PANTHER" id="PTHR45775:SF3">
    <property type="entry name" value="GTP-BINDING PROTEIN RAD"/>
    <property type="match status" value="1"/>
</dbReference>
<dbReference type="PANTHER" id="PTHR45775">
    <property type="entry name" value="RAD, GEM/KIR FAMILY MEMBER 2, ISOFORM C"/>
    <property type="match status" value="1"/>
</dbReference>
<dbReference type="Pfam" id="PF00071">
    <property type="entry name" value="Ras"/>
    <property type="match status" value="1"/>
</dbReference>
<dbReference type="PIRSF" id="PIRSF038017">
    <property type="entry name" value="GTP-binding_GEM"/>
    <property type="match status" value="1"/>
</dbReference>
<dbReference type="PRINTS" id="PR00449">
    <property type="entry name" value="RASTRNSFRMNG"/>
</dbReference>
<dbReference type="SMART" id="SM00175">
    <property type="entry name" value="RAB"/>
    <property type="match status" value="1"/>
</dbReference>
<dbReference type="SMART" id="SM00173">
    <property type="entry name" value="RAS"/>
    <property type="match status" value="1"/>
</dbReference>
<dbReference type="SUPFAM" id="SSF52540">
    <property type="entry name" value="P-loop containing nucleoside triphosphate hydrolases"/>
    <property type="match status" value="1"/>
</dbReference>
<dbReference type="PROSITE" id="PS51421">
    <property type="entry name" value="RAS"/>
    <property type="match status" value="1"/>
</dbReference>